<organism>
    <name type="scientific">Brucella melitensis biotype 2 (strain ATCC 23457)</name>
    <dbReference type="NCBI Taxonomy" id="546272"/>
    <lineage>
        <taxon>Bacteria</taxon>
        <taxon>Pseudomonadati</taxon>
        <taxon>Pseudomonadota</taxon>
        <taxon>Alphaproteobacteria</taxon>
        <taxon>Hyphomicrobiales</taxon>
        <taxon>Brucellaceae</taxon>
        <taxon>Brucella/Ochrobactrum group</taxon>
        <taxon>Brucella</taxon>
    </lineage>
</organism>
<evidence type="ECO:0000255" key="1">
    <source>
        <dbReference type="HAMAP-Rule" id="MF_00301"/>
    </source>
</evidence>
<reference key="1">
    <citation type="submission" date="2009-03" db="EMBL/GenBank/DDBJ databases">
        <title>Brucella melitensis ATCC 23457 whole genome shotgun sequencing project.</title>
        <authorList>
            <person name="Setubal J.C."/>
            <person name="Boyle S."/>
            <person name="Crasta O.R."/>
            <person name="Gillespie J.J."/>
            <person name="Kenyon R.W."/>
            <person name="Lu J."/>
            <person name="Mane S."/>
            <person name="Nagrani S."/>
            <person name="Shallom J.M."/>
            <person name="Shallom S."/>
            <person name="Shukla M."/>
            <person name="Snyder E.E."/>
            <person name="Sobral B.W."/>
            <person name="Wattam A.R."/>
            <person name="Will R."/>
            <person name="Williams K."/>
            <person name="Yoo H."/>
            <person name="Munk C."/>
            <person name="Tapia R."/>
            <person name="Han C."/>
            <person name="Detter J.C."/>
            <person name="Bruce D."/>
            <person name="Brettin T.S."/>
        </authorList>
    </citation>
    <scope>NUCLEOTIDE SEQUENCE [LARGE SCALE GENOMIC DNA]</scope>
    <source>
        <strain>ATCC 23457</strain>
    </source>
</reference>
<proteinExistence type="inferred from homology"/>
<keyword id="KW-0028">Amino-acid biosynthesis</keyword>
<keyword id="KW-0067">ATP-binding</keyword>
<keyword id="KW-0418">Kinase</keyword>
<keyword id="KW-0547">Nucleotide-binding</keyword>
<keyword id="KW-0791">Threonine biosynthesis</keyword>
<keyword id="KW-0808">Transferase</keyword>
<dbReference type="EC" id="2.7.1.39" evidence="1"/>
<dbReference type="EMBL" id="CP001488">
    <property type="protein sequence ID" value="ACO00291.1"/>
    <property type="molecule type" value="Genomic_DNA"/>
</dbReference>
<dbReference type="RefSeq" id="WP_004685478.1">
    <property type="nucleotide sequence ID" value="NC_012441.1"/>
</dbReference>
<dbReference type="SMR" id="C0RHI3"/>
<dbReference type="KEGG" id="bmi:BMEA_A0512"/>
<dbReference type="HOGENOM" id="CLU_053300_1_0_5"/>
<dbReference type="UniPathway" id="UPA00050">
    <property type="reaction ID" value="UER00064"/>
</dbReference>
<dbReference type="Proteomes" id="UP000001748">
    <property type="component" value="Chromosome I"/>
</dbReference>
<dbReference type="GO" id="GO:0005524">
    <property type="term" value="F:ATP binding"/>
    <property type="evidence" value="ECO:0007669"/>
    <property type="project" value="UniProtKB-KW"/>
</dbReference>
<dbReference type="GO" id="GO:0004413">
    <property type="term" value="F:homoserine kinase activity"/>
    <property type="evidence" value="ECO:0007669"/>
    <property type="project" value="UniProtKB-UniRule"/>
</dbReference>
<dbReference type="GO" id="GO:0009088">
    <property type="term" value="P:threonine biosynthetic process"/>
    <property type="evidence" value="ECO:0007669"/>
    <property type="project" value="UniProtKB-UniRule"/>
</dbReference>
<dbReference type="CDD" id="cd05153">
    <property type="entry name" value="HomoserineK_II"/>
    <property type="match status" value="1"/>
</dbReference>
<dbReference type="Gene3D" id="3.90.1200.10">
    <property type="match status" value="1"/>
</dbReference>
<dbReference type="Gene3D" id="3.30.200.20">
    <property type="entry name" value="Phosphorylase Kinase, domain 1"/>
    <property type="match status" value="1"/>
</dbReference>
<dbReference type="HAMAP" id="MF_00301">
    <property type="entry name" value="Homoser_kinase_2"/>
    <property type="match status" value="1"/>
</dbReference>
<dbReference type="InterPro" id="IPR002575">
    <property type="entry name" value="Aminoglycoside_PTrfase"/>
</dbReference>
<dbReference type="InterPro" id="IPR005280">
    <property type="entry name" value="Homoserine_kinase_II"/>
</dbReference>
<dbReference type="InterPro" id="IPR011009">
    <property type="entry name" value="Kinase-like_dom_sf"/>
</dbReference>
<dbReference type="InterPro" id="IPR050249">
    <property type="entry name" value="Pseudomonas-type_ThrB"/>
</dbReference>
<dbReference type="NCBIfam" id="NF003558">
    <property type="entry name" value="PRK05231.1"/>
    <property type="match status" value="1"/>
</dbReference>
<dbReference type="NCBIfam" id="TIGR00938">
    <property type="entry name" value="thrB_alt"/>
    <property type="match status" value="1"/>
</dbReference>
<dbReference type="PANTHER" id="PTHR21064:SF6">
    <property type="entry name" value="AMINOGLYCOSIDE PHOSPHOTRANSFERASE DOMAIN-CONTAINING PROTEIN"/>
    <property type="match status" value="1"/>
</dbReference>
<dbReference type="PANTHER" id="PTHR21064">
    <property type="entry name" value="AMINOGLYCOSIDE PHOSPHOTRANSFERASE DOMAIN-CONTAINING PROTEIN-RELATED"/>
    <property type="match status" value="1"/>
</dbReference>
<dbReference type="Pfam" id="PF01636">
    <property type="entry name" value="APH"/>
    <property type="match status" value="1"/>
</dbReference>
<dbReference type="SUPFAM" id="SSF56112">
    <property type="entry name" value="Protein kinase-like (PK-like)"/>
    <property type="match status" value="1"/>
</dbReference>
<protein>
    <recommendedName>
        <fullName evidence="1">Homoserine kinase</fullName>
        <shortName evidence="1">HK</shortName>
        <shortName evidence="1">HSK</shortName>
        <ecNumber evidence="1">2.7.1.39</ecNumber>
    </recommendedName>
</protein>
<sequence>MAVYTDINEIELGAFLRHYDIGTLTSYKGIAEGVENSNYLLHTSSGSFILTLYEKRTNREDLPFFLGLMQHLAKRGLECPQPVVRNDGAMIGQLAGRPAAIVTFLEGMWMRRPTVAHCEAVGEGLAHMHLAGADFPMRRRNGLTLPDWRPLWNLSRKCADTVERGLVAETEADLDFLEKNWPADLPQGVIHADLFPDNAFFLGDRLSGFIDFYFACTDILAYDVAVCLNAWCFEKDFSYNRTKGAALLRGYTSVRPLSEAEANALLVLARGAAVRFMLTRLYDWLTVPAGSFVVKKDPMEYVRRMRFHRQIESAAEYGLEMQGVAA</sequence>
<comment type="catalytic activity">
    <reaction evidence="1">
        <text>L-homoserine + ATP = O-phospho-L-homoserine + ADP + H(+)</text>
        <dbReference type="Rhea" id="RHEA:13985"/>
        <dbReference type="ChEBI" id="CHEBI:15378"/>
        <dbReference type="ChEBI" id="CHEBI:30616"/>
        <dbReference type="ChEBI" id="CHEBI:57476"/>
        <dbReference type="ChEBI" id="CHEBI:57590"/>
        <dbReference type="ChEBI" id="CHEBI:456216"/>
        <dbReference type="EC" id="2.7.1.39"/>
    </reaction>
</comment>
<comment type="pathway">
    <text evidence="1">Amino-acid biosynthesis; L-threonine biosynthesis; L-threonine from L-aspartate: step 4/5.</text>
</comment>
<comment type="similarity">
    <text evidence="1">Belongs to the pseudomonas-type ThrB family.</text>
</comment>
<gene>
    <name evidence="1" type="primary">thrB</name>
    <name type="ordered locus">BMEA_A0512</name>
</gene>
<name>KHSE_BRUMB</name>
<accession>C0RHI3</accession>
<feature type="chain" id="PRO_1000196943" description="Homoserine kinase">
    <location>
        <begin position="1"/>
        <end position="326"/>
    </location>
</feature>